<feature type="chain" id="PRO_0000236107" description="DNA replication and repair protein RecF">
    <location>
        <begin position="1"/>
        <end position="372"/>
    </location>
</feature>
<feature type="binding site" evidence="1">
    <location>
        <begin position="30"/>
        <end position="37"/>
    </location>
    <ligand>
        <name>ATP</name>
        <dbReference type="ChEBI" id="CHEBI:30616"/>
    </ligand>
</feature>
<reference key="1">
    <citation type="submission" date="2003-10" db="EMBL/GenBank/DDBJ databases">
        <title>The complete genome sequence of the alkaliphilic Bacillus clausii KSM-K16.</title>
        <authorList>
            <person name="Takaki Y."/>
            <person name="Kageyama Y."/>
            <person name="Shimamura S."/>
            <person name="Suzuki H."/>
            <person name="Nishi S."/>
            <person name="Hatada Y."/>
            <person name="Kawai S."/>
            <person name="Ito S."/>
            <person name="Horikoshi K."/>
        </authorList>
    </citation>
    <scope>NUCLEOTIDE SEQUENCE [LARGE SCALE GENOMIC DNA]</scope>
    <source>
        <strain>KSM-K16</strain>
    </source>
</reference>
<organism>
    <name type="scientific">Shouchella clausii (strain KSM-K16)</name>
    <name type="common">Alkalihalobacillus clausii</name>
    <dbReference type="NCBI Taxonomy" id="66692"/>
    <lineage>
        <taxon>Bacteria</taxon>
        <taxon>Bacillati</taxon>
        <taxon>Bacillota</taxon>
        <taxon>Bacilli</taxon>
        <taxon>Bacillales</taxon>
        <taxon>Bacillaceae</taxon>
        <taxon>Shouchella</taxon>
    </lineage>
</organism>
<comment type="function">
    <text evidence="1">The RecF protein is involved in DNA metabolism; it is required for DNA replication and normal SOS inducibility. RecF binds preferentially to single-stranded, linear DNA. It also seems to bind ATP.</text>
</comment>
<comment type="subcellular location">
    <subcellularLocation>
        <location evidence="1">Cytoplasm</location>
    </subcellularLocation>
</comment>
<comment type="similarity">
    <text evidence="1">Belongs to the RecF family.</text>
</comment>
<keyword id="KW-0067">ATP-binding</keyword>
<keyword id="KW-0963">Cytoplasm</keyword>
<keyword id="KW-0227">DNA damage</keyword>
<keyword id="KW-0234">DNA repair</keyword>
<keyword id="KW-0235">DNA replication</keyword>
<keyword id="KW-0238">DNA-binding</keyword>
<keyword id="KW-0547">Nucleotide-binding</keyword>
<keyword id="KW-1185">Reference proteome</keyword>
<keyword id="KW-0742">SOS response</keyword>
<proteinExistence type="inferred from homology"/>
<name>RECF_SHOC1</name>
<accession>Q5WM28</accession>
<sequence>MIIHTLELSSYRNYSKTAVVFGEKINVFVGENAQGKTNLLEAIYVVALAKSHRTQKDKEMIGFEEPFARIHAKAEKRTGEVELDIILSAKGKKGKINGLEQRRLSDYVGTLNVVMFAPEDLDLVKGSPQVRRRFIDMELGQISPVYLNSLSLYGKILKQRNVLLKNMQQKRSQNYAMVDVLTEQLIDKAAFVMKKRAEFISRLEEWATPIHQSISRGKEMLTLSYIPSIEVSDIENMSKIKEDLYKAYETKRETEVRRGTTLFGPHRDDVSFSVNGLDVQSYGSQGQQRTTALSVKLAEIDLIYAEIGDYPILLLDDVLSELDNYRQSHLLEAIQARVQTFVTTTSTSGLDDSVLAEACLFSVDQGTVKRLE</sequence>
<gene>
    <name evidence="1" type="primary">recF</name>
    <name type="ordered locus">ABC0004</name>
</gene>
<dbReference type="EMBL" id="AP006627">
    <property type="protein sequence ID" value="BAD62547.1"/>
    <property type="molecule type" value="Genomic_DNA"/>
</dbReference>
<dbReference type="RefSeq" id="WP_011244868.1">
    <property type="nucleotide sequence ID" value="NC_006582.1"/>
</dbReference>
<dbReference type="SMR" id="Q5WM28"/>
<dbReference type="STRING" id="66692.ABC0004"/>
<dbReference type="KEGG" id="bcl:ABC0004"/>
<dbReference type="eggNOG" id="COG1195">
    <property type="taxonomic scope" value="Bacteria"/>
</dbReference>
<dbReference type="HOGENOM" id="CLU_040267_0_1_9"/>
<dbReference type="OrthoDB" id="9803889at2"/>
<dbReference type="Proteomes" id="UP000001168">
    <property type="component" value="Chromosome"/>
</dbReference>
<dbReference type="GO" id="GO:0005737">
    <property type="term" value="C:cytoplasm"/>
    <property type="evidence" value="ECO:0007669"/>
    <property type="project" value="UniProtKB-SubCell"/>
</dbReference>
<dbReference type="GO" id="GO:0005524">
    <property type="term" value="F:ATP binding"/>
    <property type="evidence" value="ECO:0007669"/>
    <property type="project" value="UniProtKB-UniRule"/>
</dbReference>
<dbReference type="GO" id="GO:0003697">
    <property type="term" value="F:single-stranded DNA binding"/>
    <property type="evidence" value="ECO:0007669"/>
    <property type="project" value="UniProtKB-UniRule"/>
</dbReference>
<dbReference type="GO" id="GO:0006260">
    <property type="term" value="P:DNA replication"/>
    <property type="evidence" value="ECO:0007669"/>
    <property type="project" value="UniProtKB-UniRule"/>
</dbReference>
<dbReference type="GO" id="GO:0000731">
    <property type="term" value="P:DNA synthesis involved in DNA repair"/>
    <property type="evidence" value="ECO:0007669"/>
    <property type="project" value="TreeGrafter"/>
</dbReference>
<dbReference type="GO" id="GO:0006302">
    <property type="term" value="P:double-strand break repair"/>
    <property type="evidence" value="ECO:0007669"/>
    <property type="project" value="TreeGrafter"/>
</dbReference>
<dbReference type="GO" id="GO:0009432">
    <property type="term" value="P:SOS response"/>
    <property type="evidence" value="ECO:0007669"/>
    <property type="project" value="UniProtKB-UniRule"/>
</dbReference>
<dbReference type="CDD" id="cd03242">
    <property type="entry name" value="ABC_RecF"/>
    <property type="match status" value="1"/>
</dbReference>
<dbReference type="FunFam" id="1.20.1050.90:FF:000002">
    <property type="entry name" value="DNA replication and repair protein RecF"/>
    <property type="match status" value="1"/>
</dbReference>
<dbReference type="Gene3D" id="3.40.50.300">
    <property type="entry name" value="P-loop containing nucleotide triphosphate hydrolases"/>
    <property type="match status" value="1"/>
</dbReference>
<dbReference type="Gene3D" id="1.20.1050.90">
    <property type="entry name" value="RecF/RecN/SMC, N-terminal domain"/>
    <property type="match status" value="1"/>
</dbReference>
<dbReference type="HAMAP" id="MF_00365">
    <property type="entry name" value="RecF"/>
    <property type="match status" value="1"/>
</dbReference>
<dbReference type="InterPro" id="IPR001238">
    <property type="entry name" value="DNA-binding_RecF"/>
</dbReference>
<dbReference type="InterPro" id="IPR018078">
    <property type="entry name" value="DNA-binding_RecF_CS"/>
</dbReference>
<dbReference type="InterPro" id="IPR027417">
    <property type="entry name" value="P-loop_NTPase"/>
</dbReference>
<dbReference type="InterPro" id="IPR003395">
    <property type="entry name" value="RecF/RecN/SMC_N"/>
</dbReference>
<dbReference type="InterPro" id="IPR042174">
    <property type="entry name" value="RecF_2"/>
</dbReference>
<dbReference type="NCBIfam" id="TIGR00611">
    <property type="entry name" value="recf"/>
    <property type="match status" value="1"/>
</dbReference>
<dbReference type="PANTHER" id="PTHR32182">
    <property type="entry name" value="DNA REPLICATION AND REPAIR PROTEIN RECF"/>
    <property type="match status" value="1"/>
</dbReference>
<dbReference type="PANTHER" id="PTHR32182:SF0">
    <property type="entry name" value="DNA REPLICATION AND REPAIR PROTEIN RECF"/>
    <property type="match status" value="1"/>
</dbReference>
<dbReference type="Pfam" id="PF02463">
    <property type="entry name" value="SMC_N"/>
    <property type="match status" value="1"/>
</dbReference>
<dbReference type="SUPFAM" id="SSF52540">
    <property type="entry name" value="P-loop containing nucleoside triphosphate hydrolases"/>
    <property type="match status" value="1"/>
</dbReference>
<dbReference type="PROSITE" id="PS00617">
    <property type="entry name" value="RECF_1"/>
    <property type="match status" value="1"/>
</dbReference>
<dbReference type="PROSITE" id="PS00618">
    <property type="entry name" value="RECF_2"/>
    <property type="match status" value="1"/>
</dbReference>
<evidence type="ECO:0000255" key="1">
    <source>
        <dbReference type="HAMAP-Rule" id="MF_00365"/>
    </source>
</evidence>
<protein>
    <recommendedName>
        <fullName evidence="1">DNA replication and repair protein RecF</fullName>
    </recommendedName>
</protein>